<feature type="chain" id="PRO_1000140078" description="CCA-adding enzyme">
    <location>
        <begin position="1"/>
        <end position="399"/>
    </location>
</feature>
<feature type="binding site" evidence="1">
    <location>
        <position position="32"/>
    </location>
    <ligand>
        <name>ATP</name>
        <dbReference type="ChEBI" id="CHEBI:30616"/>
    </ligand>
</feature>
<feature type="binding site" evidence="1">
    <location>
        <position position="32"/>
    </location>
    <ligand>
        <name>CTP</name>
        <dbReference type="ChEBI" id="CHEBI:37563"/>
    </ligand>
</feature>
<feature type="binding site" evidence="1">
    <location>
        <position position="35"/>
    </location>
    <ligand>
        <name>ATP</name>
        <dbReference type="ChEBI" id="CHEBI:30616"/>
    </ligand>
</feature>
<feature type="binding site" evidence="1">
    <location>
        <position position="35"/>
    </location>
    <ligand>
        <name>CTP</name>
        <dbReference type="ChEBI" id="CHEBI:37563"/>
    </ligand>
</feature>
<feature type="binding site" evidence="1">
    <location>
        <position position="45"/>
    </location>
    <ligand>
        <name>Mg(2+)</name>
        <dbReference type="ChEBI" id="CHEBI:18420"/>
    </ligand>
</feature>
<feature type="binding site" evidence="1">
    <location>
        <position position="47"/>
    </location>
    <ligand>
        <name>Mg(2+)</name>
        <dbReference type="ChEBI" id="CHEBI:18420"/>
    </ligand>
</feature>
<feature type="binding site" evidence="1">
    <location>
        <position position="116"/>
    </location>
    <ligand>
        <name>ATP</name>
        <dbReference type="ChEBI" id="CHEBI:30616"/>
    </ligand>
</feature>
<feature type="binding site" evidence="1">
    <location>
        <position position="116"/>
    </location>
    <ligand>
        <name>CTP</name>
        <dbReference type="ChEBI" id="CHEBI:37563"/>
    </ligand>
</feature>
<feature type="binding site" evidence="1">
    <location>
        <position position="159"/>
    </location>
    <ligand>
        <name>ATP</name>
        <dbReference type="ChEBI" id="CHEBI:30616"/>
    </ligand>
</feature>
<feature type="binding site" evidence="1">
    <location>
        <position position="159"/>
    </location>
    <ligand>
        <name>CTP</name>
        <dbReference type="ChEBI" id="CHEBI:37563"/>
    </ligand>
</feature>
<feature type="binding site" evidence="1">
    <location>
        <position position="162"/>
    </location>
    <ligand>
        <name>ATP</name>
        <dbReference type="ChEBI" id="CHEBI:30616"/>
    </ligand>
</feature>
<feature type="binding site" evidence="1">
    <location>
        <position position="162"/>
    </location>
    <ligand>
        <name>CTP</name>
        <dbReference type="ChEBI" id="CHEBI:37563"/>
    </ligand>
</feature>
<feature type="binding site" evidence="1">
    <location>
        <position position="165"/>
    </location>
    <ligand>
        <name>ATP</name>
        <dbReference type="ChEBI" id="CHEBI:30616"/>
    </ligand>
</feature>
<feature type="binding site" evidence="1">
    <location>
        <position position="165"/>
    </location>
    <ligand>
        <name>CTP</name>
        <dbReference type="ChEBI" id="CHEBI:37563"/>
    </ligand>
</feature>
<feature type="binding site" evidence="1">
    <location>
        <position position="168"/>
    </location>
    <ligand>
        <name>ATP</name>
        <dbReference type="ChEBI" id="CHEBI:30616"/>
    </ligand>
</feature>
<feature type="binding site" evidence="1">
    <location>
        <position position="168"/>
    </location>
    <ligand>
        <name>CTP</name>
        <dbReference type="ChEBI" id="CHEBI:37563"/>
    </ligand>
</feature>
<comment type="function">
    <text evidence="1">Catalyzes the addition and repair of the essential 3'-terminal CCA sequence in tRNAs without using a nucleic acid template. Adds these three nucleotides in the order of C, C, and A to the tRNA nucleotide-73, using CTP and ATP as substrates and producing inorganic pyrophosphate. tRNA 3'-terminal CCA addition is required both for tRNA processing and repair. Also involved in tRNA surveillance by mediating tandem CCA addition to generate a CCACCA at the 3' terminus of unstable tRNAs. While stable tRNAs receive only 3'-terminal CCA, unstable tRNAs are marked with CCACCA and rapidly degraded.</text>
</comment>
<comment type="catalytic activity">
    <reaction evidence="1">
        <text>a tRNA precursor + 2 CTP + ATP = a tRNA with a 3' CCA end + 3 diphosphate</text>
        <dbReference type="Rhea" id="RHEA:14433"/>
        <dbReference type="Rhea" id="RHEA-COMP:10465"/>
        <dbReference type="Rhea" id="RHEA-COMP:10468"/>
        <dbReference type="ChEBI" id="CHEBI:30616"/>
        <dbReference type="ChEBI" id="CHEBI:33019"/>
        <dbReference type="ChEBI" id="CHEBI:37563"/>
        <dbReference type="ChEBI" id="CHEBI:74896"/>
        <dbReference type="ChEBI" id="CHEBI:83071"/>
        <dbReference type="EC" id="2.7.7.72"/>
    </reaction>
</comment>
<comment type="catalytic activity">
    <reaction evidence="1">
        <text>a tRNA with a 3' CCA end + 2 CTP + ATP = a tRNA with a 3' CCACCA end + 3 diphosphate</text>
        <dbReference type="Rhea" id="RHEA:76235"/>
        <dbReference type="Rhea" id="RHEA-COMP:10468"/>
        <dbReference type="Rhea" id="RHEA-COMP:18655"/>
        <dbReference type="ChEBI" id="CHEBI:30616"/>
        <dbReference type="ChEBI" id="CHEBI:33019"/>
        <dbReference type="ChEBI" id="CHEBI:37563"/>
        <dbReference type="ChEBI" id="CHEBI:83071"/>
        <dbReference type="ChEBI" id="CHEBI:195187"/>
    </reaction>
    <physiologicalReaction direction="left-to-right" evidence="1">
        <dbReference type="Rhea" id="RHEA:76236"/>
    </physiologicalReaction>
</comment>
<comment type="cofactor">
    <cofactor evidence="1">
        <name>Mg(2+)</name>
        <dbReference type="ChEBI" id="CHEBI:18420"/>
    </cofactor>
</comment>
<comment type="subunit">
    <text evidence="1">Homodimer.</text>
</comment>
<comment type="miscellaneous">
    <text evidence="1">A single active site specifically recognizes both ATP and CTP and is responsible for their addition.</text>
</comment>
<comment type="similarity">
    <text evidence="1">Belongs to the tRNA nucleotidyltransferase/poly(A) polymerase family. Bacterial CCA-adding enzyme type 3 subfamily.</text>
</comment>
<evidence type="ECO:0000255" key="1">
    <source>
        <dbReference type="HAMAP-Rule" id="MF_01263"/>
    </source>
</evidence>
<accession>B2IR74</accession>
<keyword id="KW-0067">ATP-binding</keyword>
<keyword id="KW-0460">Magnesium</keyword>
<keyword id="KW-0479">Metal-binding</keyword>
<keyword id="KW-0547">Nucleotide-binding</keyword>
<keyword id="KW-0548">Nucleotidyltransferase</keyword>
<keyword id="KW-0692">RNA repair</keyword>
<keyword id="KW-0694">RNA-binding</keyword>
<keyword id="KW-0808">Transferase</keyword>
<keyword id="KW-0819">tRNA processing</keyword>
<dbReference type="EC" id="2.7.7.72" evidence="1"/>
<dbReference type="EMBL" id="CP001033">
    <property type="protein sequence ID" value="ACB90793.1"/>
    <property type="molecule type" value="Genomic_DNA"/>
</dbReference>
<dbReference type="RefSeq" id="WP_001842718.1">
    <property type="nucleotide sequence ID" value="NC_010582.1"/>
</dbReference>
<dbReference type="SMR" id="B2IR74"/>
<dbReference type="KEGG" id="spw:SPCG_1541"/>
<dbReference type="HOGENOM" id="CLU_015961_3_1_9"/>
<dbReference type="GO" id="GO:0005524">
    <property type="term" value="F:ATP binding"/>
    <property type="evidence" value="ECO:0007669"/>
    <property type="project" value="UniProtKB-UniRule"/>
</dbReference>
<dbReference type="GO" id="GO:0004810">
    <property type="term" value="F:CCA tRNA nucleotidyltransferase activity"/>
    <property type="evidence" value="ECO:0007669"/>
    <property type="project" value="UniProtKB-UniRule"/>
</dbReference>
<dbReference type="GO" id="GO:0000287">
    <property type="term" value="F:magnesium ion binding"/>
    <property type="evidence" value="ECO:0007669"/>
    <property type="project" value="UniProtKB-UniRule"/>
</dbReference>
<dbReference type="GO" id="GO:0000049">
    <property type="term" value="F:tRNA binding"/>
    <property type="evidence" value="ECO:0007669"/>
    <property type="project" value="UniProtKB-UniRule"/>
</dbReference>
<dbReference type="GO" id="GO:0042245">
    <property type="term" value="P:RNA repair"/>
    <property type="evidence" value="ECO:0007669"/>
    <property type="project" value="UniProtKB-KW"/>
</dbReference>
<dbReference type="GO" id="GO:0001680">
    <property type="term" value="P:tRNA 3'-terminal CCA addition"/>
    <property type="evidence" value="ECO:0007669"/>
    <property type="project" value="UniProtKB-UniRule"/>
</dbReference>
<dbReference type="CDD" id="cd05398">
    <property type="entry name" value="NT_ClassII-CCAase"/>
    <property type="match status" value="1"/>
</dbReference>
<dbReference type="Gene3D" id="1.10.110.30">
    <property type="match status" value="1"/>
</dbReference>
<dbReference type="Gene3D" id="1.10.246.80">
    <property type="match status" value="1"/>
</dbReference>
<dbReference type="Gene3D" id="1.20.58.560">
    <property type="match status" value="1"/>
</dbReference>
<dbReference type="Gene3D" id="3.30.460.10">
    <property type="entry name" value="Beta Polymerase, domain 2"/>
    <property type="match status" value="1"/>
</dbReference>
<dbReference type="HAMAP" id="MF_01263">
    <property type="entry name" value="CCA_bact_type3"/>
    <property type="match status" value="1"/>
</dbReference>
<dbReference type="InterPro" id="IPR050264">
    <property type="entry name" value="Bact_CCA-adding_enz_type3_sf"/>
</dbReference>
<dbReference type="InterPro" id="IPR032810">
    <property type="entry name" value="CCA-adding_enz_C"/>
</dbReference>
<dbReference type="InterPro" id="IPR023068">
    <property type="entry name" value="CCA-adding_enz_firmicutes"/>
</dbReference>
<dbReference type="InterPro" id="IPR043519">
    <property type="entry name" value="NT_sf"/>
</dbReference>
<dbReference type="InterPro" id="IPR002646">
    <property type="entry name" value="PolA_pol_head_dom"/>
</dbReference>
<dbReference type="InterPro" id="IPR032828">
    <property type="entry name" value="PolyA_RNA-bd"/>
</dbReference>
<dbReference type="NCBIfam" id="NF009814">
    <property type="entry name" value="PRK13299.1"/>
    <property type="match status" value="1"/>
</dbReference>
<dbReference type="PANTHER" id="PTHR46173">
    <property type="entry name" value="CCA TRNA NUCLEOTIDYLTRANSFERASE 1, MITOCHONDRIAL"/>
    <property type="match status" value="1"/>
</dbReference>
<dbReference type="PANTHER" id="PTHR46173:SF1">
    <property type="entry name" value="CCA TRNA NUCLEOTIDYLTRANSFERASE 1, MITOCHONDRIAL"/>
    <property type="match status" value="1"/>
</dbReference>
<dbReference type="Pfam" id="PF01743">
    <property type="entry name" value="PolyA_pol"/>
    <property type="match status" value="1"/>
</dbReference>
<dbReference type="Pfam" id="PF12627">
    <property type="entry name" value="PolyA_pol_RNAbd"/>
    <property type="match status" value="1"/>
</dbReference>
<dbReference type="Pfam" id="PF13735">
    <property type="entry name" value="tRNA_NucTran2_2"/>
    <property type="match status" value="1"/>
</dbReference>
<dbReference type="SUPFAM" id="SSF81301">
    <property type="entry name" value="Nucleotidyltransferase"/>
    <property type="match status" value="1"/>
</dbReference>
<dbReference type="SUPFAM" id="SSF81891">
    <property type="entry name" value="Poly A polymerase C-terminal region-like"/>
    <property type="match status" value="1"/>
</dbReference>
<gene>
    <name evidence="1" type="primary">cca</name>
    <name type="ordered locus">SPCG_1541</name>
</gene>
<sequence length="399" mass="45773">MRLTQMPSEFQKALPVLEKIKEAGFEAYFVGGSVRDALLHSPIHDVDIATSSYPEETKQIFPRTADIGIEHGTVLVLDGDEEYEVTTFRTEDVYVDYRRPSAVSFVRSLEEDLKRRDFTVNAFALDETGEIVDLFHGLEDLEKQVLRAVGVASERFNEDALRIMRGFRFQASLGFALEPETFKAMKTLTPLLEKISVERTFVEFDKLLLAPFWRRGLASMIESQAYDYLPDMASSQDKLNRLFDLETDFTFESSEQAWAALLWALEIENAQSFLKSWKTSRQFAKQVQDLLIILALRENGELSKRDCYRFDIDLLLQAENLRQAQGKEVNPQAITEKYQSLTIHDKKDIQINGGILIKEYGYQPGPDLGEILTEIEFAIVDGELENNREAIHAYLREKK</sequence>
<protein>
    <recommendedName>
        <fullName evidence="1">CCA-adding enzyme</fullName>
        <ecNumber evidence="1">2.7.7.72</ecNumber>
    </recommendedName>
    <alternativeName>
        <fullName evidence="1">CCA tRNA nucleotidyltransferase</fullName>
    </alternativeName>
    <alternativeName>
        <fullName evidence="1">tRNA CCA-pyrophosphorylase</fullName>
    </alternativeName>
    <alternativeName>
        <fullName evidence="1">tRNA adenylyl-/cytidylyl- transferase</fullName>
    </alternativeName>
    <alternativeName>
        <fullName evidence="1">tRNA nucleotidyltransferase</fullName>
    </alternativeName>
    <alternativeName>
        <fullName evidence="1">tRNA-NT</fullName>
    </alternativeName>
</protein>
<proteinExistence type="inferred from homology"/>
<name>CCA_STRPS</name>
<reference key="1">
    <citation type="journal article" date="2009" name="BMC Genomics">
        <title>Genome evolution driven by host adaptations results in a more virulent and antimicrobial-resistant Streptococcus pneumoniae serotype 14.</title>
        <authorList>
            <person name="Ding F."/>
            <person name="Tang P."/>
            <person name="Hsu M.-H."/>
            <person name="Cui P."/>
            <person name="Hu S."/>
            <person name="Yu J."/>
            <person name="Chiu C.-H."/>
        </authorList>
    </citation>
    <scope>NUCLEOTIDE SEQUENCE [LARGE SCALE GENOMIC DNA]</scope>
    <source>
        <strain>CGSP14</strain>
    </source>
</reference>
<organism>
    <name type="scientific">Streptococcus pneumoniae (strain CGSP14)</name>
    <dbReference type="NCBI Taxonomy" id="516950"/>
    <lineage>
        <taxon>Bacteria</taxon>
        <taxon>Bacillati</taxon>
        <taxon>Bacillota</taxon>
        <taxon>Bacilli</taxon>
        <taxon>Lactobacillales</taxon>
        <taxon>Streptococcaceae</taxon>
        <taxon>Streptococcus</taxon>
    </lineage>
</organism>